<organism>
    <name type="scientific">Human adenovirus D serotype 9</name>
    <name type="common">HAdV-9</name>
    <name type="synonym">Human adenovirus 9</name>
    <dbReference type="NCBI Taxonomy" id="10527"/>
    <lineage>
        <taxon>Viruses</taxon>
        <taxon>Varidnaviria</taxon>
        <taxon>Bamfordvirae</taxon>
        <taxon>Preplasmiviricota</taxon>
        <taxon>Tectiliviricetes</taxon>
        <taxon>Rowavirales</taxon>
        <taxon>Adenoviridae</taxon>
        <taxon>Mastadenovirus</taxon>
        <taxon>Human mastadenovirus D</taxon>
    </lineage>
</organism>
<accession>P36853</accession>
<accession>Q5TJ04</accession>
<reference key="1">
    <citation type="submission" date="2004-11" db="EMBL/GenBank/DDBJ databases">
        <title>Adenovirus type 9, complete sequence.</title>
        <authorList>
            <person name="Buettner W.H."/>
            <person name="Veres-Molnar S.K."/>
        </authorList>
    </citation>
    <scope>NUCLEOTIDE SEQUENCE [GENOMIC DNA]</scope>
    <source>
        <strain>Isolate ATCC VR-1086 / Hicks / V-209-003-014</strain>
    </source>
</reference>
<reference key="2">
    <citation type="journal article" date="1995" name="Virology">
        <title>Immunological adenovirus variant strains of subgenus D: comparison of the hexon and fiber sequences.</title>
        <authorList>
            <person name="Eiz B."/>
            <person name="Adrian T."/>
            <person name="Pring-Akerblom P."/>
        </authorList>
    </citation>
    <scope>NUCLEOTIDE SEQUENCE [GENOMIC DNA] OF 111-621</scope>
    <source>
        <strain>Isolate ATCC VR-1086 / Hicks / V-209-003-014</strain>
        <strain>Isolate N-62</strain>
    </source>
</reference>
<comment type="function">
    <text evidence="1">Major capsid protein that self-associates to form 240 hexon trimers, each in the shape of a hexagon, building most of the pseudo T=25 capsid. Assembled into trimeric units with the help of the chaperone shutoff protein. Transported by pre-protein VI to the nucleus where it associates with other structural proteins to form an empty capsid. Might be involved, through its interaction with host dyneins, in the intracellular microtubule-dependent transport of incoming viral capsid to the nucleus.</text>
</comment>
<comment type="subunit">
    <text evidence="1">Homotrimer. Interacts with the capsid vertex protein; this interaction binds the peripentonal hexons to the neighboring penton base. Interacts with the hexon-linking protein; this interaction tethers the hexons surrounding the penton to those situated in the central plate of the facet. Interacts with the hexon-interlacing protein; this interaction lashes the hexons together. Interacts with host dyneins DYNC1LI1 and DYNC1I2; this interaction might be involved in intracellular microtubule-dependent transport of incoming viral capsid. Interacts with the shutoff protein; this interaction allows folding and formation of hexons trimers. Interacts with pre-protein VI; this interaction probably allows nuclear import of hexon trimers and possibly pre-capsid assembly.</text>
</comment>
<comment type="subcellular location">
    <subcellularLocation>
        <location evidence="1">Virion</location>
    </subcellularLocation>
    <subcellularLocation>
        <location evidence="1">Host nucleus</location>
    </subcellularLocation>
    <text evidence="1">Forms the capsid icosahedric shell. Present in 720 copies per virion, assembled in 240 trimers.</text>
</comment>
<comment type="induction">
    <text evidence="1">Expressed in the late phase of the viral replicative cycle.</text>
</comment>
<comment type="miscellaneous">
    <text evidence="1">All late proteins expressed from the major late promoter are produced by alternative splicing and alternative polyadenylation of the same gene giving rise to non-overlapping ORFs. A leader sequence is present in the N-terminus of all these mRNAs and is recognized by the viral shutoff protein to provide expression although conventional translation via ribosome scanning from the cap has been shut off in the host cell.</text>
</comment>
<comment type="similarity">
    <text evidence="1 2">Belongs to the adenoviridae hexon protein family.</text>
</comment>
<comment type="sequence caution">
    <conflict type="erroneous initiation">
        <sequence resource="EMBL-CDS" id="CAA52721"/>
    </conflict>
    <text>Extended N-terminus.</text>
</comment>
<comment type="sequence caution">
    <conflict type="erroneous initiation">
        <sequence resource="EMBL-CDS" id="CAA52728"/>
    </conflict>
    <text>Extended N-terminus.</text>
</comment>
<comment type="sequence caution">
    <conflict type="erroneous initiation">
        <sequence resource="EMBL-CDS" id="CAI05969"/>
    </conflict>
    <text>Extended N-terminus.</text>
</comment>
<sequence length="943" mass="106055">MATPSMMPQWAYMHIAGQDASEYLSPGLVQFARATDTYFSLGNKFRNPTVAPTHDVTTDRSQRLTLRFVPVDREDTTYSYKARFTLAVGDNRVLDMASTYFDIRGVLDRGPSFKPYSGTAYNSLAPKGAPNSSQWLAKDTNAGDQALKTHTHGVAAMGGTDITAKGLQIGVDTTENKNEPIYANEIYQPEPQVGEENLQDVENFYGGRALKKETKMKPCYGSFARPTNEKGGQAKFLTDGDGQLTKNHDITMNFFDTPGGTVGQDTELEADIVMYAENVHLETPDTHVVYKPGTSDESSEANLVQQSMPNRPNYIGFRDNFVGLMYYNSTGNMGVLAGQASQLNAVVDLQDRNTELSYQLLLDSLGDRTRYFSMWNSAVDSYDPDVRIIENHGVEDELPNYCFPLDGAGTNATYQGVKVKNGQDGDVNADWEKDPNLASRNQICKGNIFAMEINLQANLWKSFLYSNVALYLPDSYKYTPANVTLPANTNTYEYMNGRVVAPSLVDAYINIGARWSLDPMDNVNPFNHHRNAGLRYRSMLLGNGRYVPFHIQVPQKFFAIKNLLLLPGSYTYEWNFRKDVNMILQSSLGNDLRVDGASVRFDSVNLYATFFPMAHNTASTLEAMLRNDTNDQSFNDYLSAANMLYPIPAKATNVPISIPSRNWAAFRGWSFTRLKTKETPSLGSGFDPYFVYSGSIPYLDGTFYLNHTFKKVSIMFDSSVSWPGNDRLLTPNEFEIKRSVDGEGYNVAQCNMTKDWFLVQMLSHYNIGYQGFHVPEGYKDRMYSFFRNFQPMSRQVVDEINYKDYKAVTLPFQHNNSGFTGYLAPTMRQGQPYPANFPYPLIGQTAVPSVTQKKFLCDRVMWRIPFSSNFMSMGALTDLGQNMLYANSAHALDMTFEVDPMDEPTLLYLLFEVFDVVRVHQPHRGVIEAVYLRTPFSAGNATT</sequence>
<evidence type="ECO:0000255" key="1">
    <source>
        <dbReference type="HAMAP-Rule" id="MF_04051"/>
    </source>
</evidence>
<evidence type="ECO:0000305" key="2"/>
<protein>
    <recommendedName>
        <fullName evidence="1">Hexon protein</fullName>
        <shortName evidence="1">CP-H</shortName>
    </recommendedName>
    <alternativeName>
        <fullName evidence="1">Protein II</fullName>
    </alternativeName>
</protein>
<keyword id="KW-0007">Acetylation</keyword>
<keyword id="KW-0167">Capsid protein</keyword>
<keyword id="KW-1176">Cytoplasmic inwards viral transport</keyword>
<keyword id="KW-1048">Host nucleus</keyword>
<keyword id="KW-0945">Host-virus interaction</keyword>
<keyword id="KW-0426">Late protein</keyword>
<keyword id="KW-1177">Microtubular inwards viral transport</keyword>
<keyword id="KW-0597">Phosphoprotein</keyword>
<keyword id="KW-1148">T=25 icosahedral capsid protein</keyword>
<keyword id="KW-0946">Virion</keyword>
<keyword id="KW-1160">Virus entry into host cell</keyword>
<name>CAPSH_ADE09</name>
<organismHost>
    <name type="scientific">Homo sapiens</name>
    <name type="common">Human</name>
    <dbReference type="NCBI Taxonomy" id="9606"/>
</organismHost>
<proteinExistence type="inferred from homology"/>
<dbReference type="EMBL" id="AJ854486">
    <property type="protein sequence ID" value="CAI05969.1"/>
    <property type="status" value="ALT_INIT"/>
    <property type="molecule type" value="Genomic_DNA"/>
</dbReference>
<dbReference type="EMBL" id="X74664">
    <property type="protein sequence ID" value="CAA52728.1"/>
    <property type="status" value="ALT_INIT"/>
    <property type="molecule type" value="Genomic_DNA"/>
</dbReference>
<dbReference type="EMBL" id="X74657">
    <property type="protein sequence ID" value="CAA52721.1"/>
    <property type="status" value="ALT_INIT"/>
    <property type="molecule type" value="Genomic_DNA"/>
</dbReference>
<dbReference type="PIR" id="S37279">
    <property type="entry name" value="S37279"/>
</dbReference>
<dbReference type="SMR" id="P36853"/>
<dbReference type="Proteomes" id="UP000118285">
    <property type="component" value="Genome"/>
</dbReference>
<dbReference type="GO" id="GO:0043657">
    <property type="term" value="C:host cell"/>
    <property type="evidence" value="ECO:0007669"/>
    <property type="project" value="GOC"/>
</dbReference>
<dbReference type="GO" id="GO:0042025">
    <property type="term" value="C:host cell nucleus"/>
    <property type="evidence" value="ECO:0007669"/>
    <property type="project" value="UniProtKB-SubCell"/>
</dbReference>
<dbReference type="GO" id="GO:0039623">
    <property type="term" value="C:T=25 icosahedral viral capsid"/>
    <property type="evidence" value="ECO:0007669"/>
    <property type="project" value="UniProtKB-UniRule"/>
</dbReference>
<dbReference type="GO" id="GO:0005198">
    <property type="term" value="F:structural molecule activity"/>
    <property type="evidence" value="ECO:0007669"/>
    <property type="project" value="UniProtKB-UniRule"/>
</dbReference>
<dbReference type="GO" id="GO:0075521">
    <property type="term" value="P:microtubule-dependent intracellular transport of viral material towards nucleus"/>
    <property type="evidence" value="ECO:0007669"/>
    <property type="project" value="UniProtKB-UniRule"/>
</dbReference>
<dbReference type="GO" id="GO:0046718">
    <property type="term" value="P:symbiont entry into host cell"/>
    <property type="evidence" value="ECO:0007669"/>
    <property type="project" value="UniProtKB-UniRule"/>
</dbReference>
<dbReference type="FunFam" id="2.70.9.10:FF:000001">
    <property type="entry name" value="Hexon protein"/>
    <property type="match status" value="1"/>
</dbReference>
<dbReference type="Gene3D" id="2.70.9.10">
    <property type="entry name" value="Adenovirus Type 2 Hexon, domain 4"/>
    <property type="match status" value="1"/>
</dbReference>
<dbReference type="Gene3D" id="3.90.39.10">
    <property type="entry name" value="Hexon Major Viral Coat Protein, domain 2"/>
    <property type="match status" value="1"/>
</dbReference>
<dbReference type="Gene3D" id="3.90.249.10">
    <property type="entry name" value="Hexon Major Viral Coat Protein, domain 3"/>
    <property type="match status" value="3"/>
</dbReference>
<dbReference type="HAMAP" id="MF_04051">
    <property type="entry name" value="ADV_CAPSH"/>
    <property type="match status" value="1"/>
</dbReference>
<dbReference type="InterPro" id="IPR016108">
    <property type="entry name" value="Adenovirus_Pll_hexon_C"/>
</dbReference>
<dbReference type="InterPro" id="IPR016107">
    <property type="entry name" value="Adenovirus_Pll_hexon_N"/>
</dbReference>
<dbReference type="InterPro" id="IPR044942">
    <property type="entry name" value="Adenovirus_Pll_hexon_sub2"/>
</dbReference>
<dbReference type="InterPro" id="IPR016110">
    <property type="entry name" value="Adenovirus_Pll_hexon_sub3"/>
</dbReference>
<dbReference type="InterPro" id="IPR037542">
    <property type="entry name" value="ADV_hexon"/>
</dbReference>
<dbReference type="InterPro" id="IPR016112">
    <property type="entry name" value="VP_dsDNA_II"/>
</dbReference>
<dbReference type="Pfam" id="PF01065">
    <property type="entry name" value="Adeno_hexon"/>
    <property type="match status" value="1"/>
</dbReference>
<dbReference type="Pfam" id="PF03678">
    <property type="entry name" value="Adeno_hexon_C"/>
    <property type="match status" value="1"/>
</dbReference>
<dbReference type="SUPFAM" id="SSF49749">
    <property type="entry name" value="Group II dsDNA viruses VP"/>
    <property type="match status" value="2"/>
</dbReference>
<feature type="initiator methionine" description="Removed; by host" evidence="1">
    <location>
        <position position="1"/>
    </location>
</feature>
<feature type="chain" id="PRO_0000439756" description="Hexon protein" evidence="1">
    <location>
        <begin position="2"/>
        <end position="943"/>
    </location>
</feature>
<feature type="site" description="Involved in interaction with pre-protein VI" evidence="1">
    <location>
        <position position="768"/>
    </location>
</feature>
<feature type="modified residue" description="N-acetylalanine; by host" evidence="1">
    <location>
        <position position="2"/>
    </location>
</feature>
<feature type="modified residue" description="Phosphotyrosine; by host" evidence="1">
    <location>
        <position position="931"/>
    </location>
</feature>
<feature type="sequence conflict" description="In Ref. 2; CAA52728/CAA52721." evidence="2" ref="2">
    <original>A</original>
    <variation>R</variation>
    <location>
        <position position="155"/>
    </location>
</feature>
<feature type="sequence conflict" description="In Ref. 2; CAA52728/CAA52721." evidence="2" ref="2">
    <original>GQAK</original>
    <variation>PVKPN</variation>
    <location>
        <begin position="232"/>
        <end position="235"/>
    </location>
</feature>
<feature type="sequence conflict" description="In Ref. 2; CAA52728/CAA52721." evidence="2" ref="2">
    <original>L</original>
    <variation>M</variation>
    <location>
        <position position="281"/>
    </location>
</feature>
<feature type="sequence conflict" description="In Ref. 2; CAA52728/CAA52721." evidence="2" ref="2">
    <original>G</original>
    <variation>E</variation>
    <location>
        <position position="407"/>
    </location>
</feature>
<feature type="sequence conflict" description="In Ref. 2; CAA52728/CAA52721." evidence="2" ref="2">
    <original>N</original>
    <variation>H</variation>
    <location>
        <position position="454"/>
    </location>
</feature>
<feature type="sequence conflict" description="In Ref. 2; CAA52728/CAA52721." evidence="2" ref="2">
    <original>KY</original>
    <variation>ND</variation>
    <location>
        <begin position="477"/>
        <end position="478"/>
    </location>
</feature>
<feature type="sequence conflict" description="In Ref. 2; CAA52728/CAA52721." evidence="2" ref="2">
    <original>V</original>
    <variation>I</variation>
    <location>
        <position position="483"/>
    </location>
</feature>
<feature type="sequence conflict" description="In Ref. 2; CAA52728/CAA52721." evidence="2" ref="2">
    <original>A</original>
    <variation>T</variation>
    <location>
        <position position="487"/>
    </location>
</feature>
<feature type="sequence conflict" description="In Ref. 2; CAA52728/CAA52721." evidence="2" ref="2">
    <original>R</original>
    <variation>H</variation>
    <location>
        <position position="498"/>
    </location>
</feature>
<feature type="sequence conflict" description="In Ref. 2; CAA52728/CAA52721." evidence="2" ref="2">
    <original>R</original>
    <variation>A</variation>
    <location>
        <position position="535"/>
    </location>
</feature>
<gene>
    <name evidence="1" type="primary">L3</name>
</gene>